<feature type="chain" id="PRO_0000058533" description="Alkaline phosphatase">
    <location>
        <begin position="1" status="less than"/>
        <end position="20" status="greater than"/>
    </location>
</feature>
<feature type="region of interest" description="Disordered" evidence="1">
    <location>
        <begin position="1"/>
        <end position="20"/>
    </location>
</feature>
<feature type="non-terminal residue" evidence="2">
    <location>
        <position position="1"/>
    </location>
</feature>
<feature type="non-terminal residue" evidence="2">
    <location>
        <position position="20"/>
    </location>
</feature>
<evidence type="ECO:0000256" key="1">
    <source>
        <dbReference type="SAM" id="MobiDB-lite"/>
    </source>
</evidence>
<evidence type="ECO:0000305" key="2"/>
<sequence>TDMLAVSVSSTDAIGHKYGT</sequence>
<proteinExistence type="evidence at protein level"/>
<dbReference type="EC" id="3.1.3.1"/>
<dbReference type="STRING" id="28131.BWX40_11465"/>
<dbReference type="GO" id="GO:0004035">
    <property type="term" value="F:alkaline phosphatase activity"/>
    <property type="evidence" value="ECO:0000314"/>
    <property type="project" value="UniProtKB"/>
</dbReference>
<dbReference type="GO" id="GO:0004725">
    <property type="term" value="F:protein tyrosine phosphatase activity"/>
    <property type="evidence" value="ECO:0000314"/>
    <property type="project" value="UniProtKB"/>
</dbReference>
<dbReference type="GO" id="GO:0035335">
    <property type="term" value="P:peptidyl-tyrosine dephosphorylation"/>
    <property type="evidence" value="ECO:0000314"/>
    <property type="project" value="UniProtKB"/>
</dbReference>
<reference evidence="2" key="1">
    <citation type="journal article" date="1998" name="FEBS Lett.">
        <title>Purification and characterization of alkaline phosphatase containing phosphotyrosyl phosphatase activity from the bacterium Prevotella intermedia.</title>
        <authorList>
            <person name="Ansai T."/>
            <person name="Awano S."/>
            <person name="Chen X."/>
            <person name="Fuchi T."/>
            <person name="Arimoto T."/>
            <person name="Akifusa S."/>
            <person name="Takehara T."/>
        </authorList>
    </citation>
    <scope>PROTEIN SEQUENCE</scope>
    <scope>CHARACTERIZATION</scope>
    <source>
        <strain>ATCC 25611 / DSM 20706 / JCM 12248 / NCTC 13070 / VPI 4197</strain>
    </source>
</reference>
<keyword id="KW-0903">Direct protein sequencing</keyword>
<keyword id="KW-1015">Disulfide bond</keyword>
<keyword id="KW-0378">Hydrolase</keyword>
<name>PPB1_PREIN</name>
<protein>
    <recommendedName>
        <fullName>Alkaline phosphatase</fullName>
        <shortName>ALPase</shortName>
        <ecNumber>3.1.3.1</ecNumber>
    </recommendedName>
    <alternativeName>
        <fullName>PiALP</fullName>
    </alternativeName>
</protein>
<comment type="function">
    <text evidence="2">Acts against tyrosine-phosphatases.</text>
</comment>
<comment type="catalytic activity">
    <reaction>
        <text>a phosphate monoester + H2O = an alcohol + phosphate</text>
        <dbReference type="Rhea" id="RHEA:15017"/>
        <dbReference type="ChEBI" id="CHEBI:15377"/>
        <dbReference type="ChEBI" id="CHEBI:30879"/>
        <dbReference type="ChEBI" id="CHEBI:43474"/>
        <dbReference type="ChEBI" id="CHEBI:67140"/>
        <dbReference type="EC" id="3.1.3.1"/>
    </reaction>
</comment>
<comment type="activity regulation">
    <text>Completely inhibited by thiol-reducing agents, such as DTT and 2-mercaptoethanol. Activity was also inhibited by sodium orthovanadate, sodium molybdate, N-ethylmaleimide, EDTA and zinc ion, but was not inhibited by okadaic acid.</text>
</comment>
<comment type="subunit">
    <text evidence="2">Homodimer; may be disulfide-linked.</text>
</comment>
<comment type="PTM">
    <text>The N-terminus is blocked.</text>
</comment>
<organism evidence="2">
    <name type="scientific">Prevotella intermedia</name>
    <dbReference type="NCBI Taxonomy" id="28131"/>
    <lineage>
        <taxon>Bacteria</taxon>
        <taxon>Pseudomonadati</taxon>
        <taxon>Bacteroidota</taxon>
        <taxon>Bacteroidia</taxon>
        <taxon>Bacteroidales</taxon>
        <taxon>Prevotellaceae</taxon>
        <taxon>Prevotella</taxon>
    </lineage>
</organism>
<accession>P81800</accession>